<proteinExistence type="evidence at transcript level"/>
<name>TIKI1_NEMVE</name>
<evidence type="ECO:0000250" key="1"/>
<evidence type="ECO:0000255" key="2"/>
<evidence type="ECO:0000256" key="3">
    <source>
        <dbReference type="SAM" id="MobiDB-lite"/>
    </source>
</evidence>
<evidence type="ECO:0000305" key="4"/>
<reference key="1">
    <citation type="journal article" date="2012" name="Cell">
        <title>Tiki1 is required for head formation via Wnt cleavage-oxidation and inactivation.</title>
        <authorList>
            <person name="Zhang X."/>
            <person name="Abreu J.G."/>
            <person name="Yokota C."/>
            <person name="Macdonald B.T."/>
            <person name="Singh S."/>
            <person name="Coburn K.L."/>
            <person name="Cheong S.M."/>
            <person name="Zhang M.M."/>
            <person name="Ye Q.Z."/>
            <person name="Hang H.C."/>
            <person name="Steen H."/>
            <person name="He X."/>
        </authorList>
    </citation>
    <scope>NUCLEOTIDE SEQUENCE [MRNA]</scope>
</reference>
<reference key="2">
    <citation type="journal article" date="2007" name="Science">
        <title>Sea anemone genome reveals ancestral eumetazoan gene repertoire and genomic organization.</title>
        <authorList>
            <person name="Putnam N.H."/>
            <person name="Srivastava M."/>
            <person name="Hellsten U."/>
            <person name="Dirks B."/>
            <person name="Chapman J."/>
            <person name="Salamov A."/>
            <person name="Terry A."/>
            <person name="Shapiro H."/>
            <person name="Lindquist E."/>
            <person name="Kapitonov V.V."/>
            <person name="Jurka J."/>
            <person name="Genikhovich G."/>
            <person name="Grigoriev I.V."/>
            <person name="Lucas S.M."/>
            <person name="Steele R.E."/>
            <person name="Finnerty J.R."/>
            <person name="Technau U."/>
            <person name="Martindale M.Q."/>
            <person name="Rokhsar D.S."/>
        </authorList>
    </citation>
    <scope>NUCLEOTIDE SEQUENCE [LARGE SCALE GENOMIC DNA]</scope>
    <source>
        <strain>CH2 X CH6</strain>
    </source>
</reference>
<gene>
    <name type="ORF">v1g27680</name>
</gene>
<dbReference type="EC" id="3.4.-.-"/>
<dbReference type="EMBL" id="JQ653422">
    <property type="protein sequence ID" value="AFN02888.1"/>
    <property type="molecule type" value="mRNA"/>
</dbReference>
<dbReference type="EMBL" id="DS469549">
    <property type="protein sequence ID" value="EDO43979.1"/>
    <property type="status" value="ALT_SEQ"/>
    <property type="molecule type" value="Genomic_DNA"/>
</dbReference>
<dbReference type="RefSeq" id="XP_001636042.1">
    <property type="nucleotide sequence ID" value="XM_001635992.1"/>
</dbReference>
<dbReference type="FunCoup" id="A7RX69">
    <property type="interactions" value="2"/>
</dbReference>
<dbReference type="MEROPS" id="G04.001"/>
<dbReference type="KEGG" id="nve:5515928"/>
<dbReference type="eggNOG" id="ENOG502QPR1">
    <property type="taxonomic scope" value="Eukaryota"/>
</dbReference>
<dbReference type="HOGENOM" id="CLU_103594_0_0_1"/>
<dbReference type="InParanoid" id="A7RX69"/>
<dbReference type="OrthoDB" id="10040378at2759"/>
<dbReference type="Proteomes" id="UP000001593">
    <property type="component" value="Unassembled WGS sequence"/>
</dbReference>
<dbReference type="GO" id="GO:0016020">
    <property type="term" value="C:membrane"/>
    <property type="evidence" value="ECO:0000318"/>
    <property type="project" value="GO_Central"/>
</dbReference>
<dbReference type="GO" id="GO:0046872">
    <property type="term" value="F:metal ion binding"/>
    <property type="evidence" value="ECO:0007669"/>
    <property type="project" value="UniProtKB-KW"/>
</dbReference>
<dbReference type="GO" id="GO:0004222">
    <property type="term" value="F:metalloendopeptidase activity"/>
    <property type="evidence" value="ECO:0000318"/>
    <property type="project" value="GO_Central"/>
</dbReference>
<dbReference type="GO" id="GO:0030178">
    <property type="term" value="P:negative regulation of Wnt signaling pathway"/>
    <property type="evidence" value="ECO:0007669"/>
    <property type="project" value="InterPro"/>
</dbReference>
<dbReference type="GO" id="GO:0006508">
    <property type="term" value="P:proteolysis"/>
    <property type="evidence" value="ECO:0007669"/>
    <property type="project" value="UniProtKB-KW"/>
</dbReference>
<dbReference type="CDD" id="cd14789">
    <property type="entry name" value="Tiki"/>
    <property type="match status" value="1"/>
</dbReference>
<dbReference type="InterPro" id="IPR040230">
    <property type="entry name" value="TIKI1/2-like"/>
</dbReference>
<dbReference type="InterPro" id="IPR002816">
    <property type="entry name" value="TraB/PrgY/GumN_fam"/>
</dbReference>
<dbReference type="PANTHER" id="PTHR31120">
    <property type="entry name" value="METALLOPROTEASE TIKI"/>
    <property type="match status" value="1"/>
</dbReference>
<dbReference type="PANTHER" id="PTHR31120:SF6">
    <property type="entry name" value="METALLOPROTEASE TIKI HOMOLOG"/>
    <property type="match status" value="1"/>
</dbReference>
<dbReference type="Pfam" id="PF01963">
    <property type="entry name" value="TraB_PrgY_gumN"/>
    <property type="match status" value="1"/>
</dbReference>
<feature type="signal peptide" evidence="2">
    <location>
        <begin position="1"/>
        <end position="24"/>
    </location>
</feature>
<feature type="chain" id="PRO_0000419455" description="Metalloprotease TIKI homolog">
    <location>
        <begin position="25"/>
        <end position="471"/>
    </location>
</feature>
<feature type="topological domain" description="Extracellular" evidence="2">
    <location>
        <begin position="25"/>
        <end position="449"/>
    </location>
</feature>
<feature type="transmembrane region" description="Helical" evidence="2">
    <location>
        <begin position="450"/>
        <end position="470"/>
    </location>
</feature>
<feature type="topological domain" description="Cytoplasmic" evidence="2">
    <location>
        <position position="471"/>
    </location>
</feature>
<feature type="region of interest" description="Disordered" evidence="3">
    <location>
        <begin position="369"/>
        <end position="406"/>
    </location>
</feature>
<feature type="compositionally biased region" description="Basic residues" evidence="3">
    <location>
        <begin position="369"/>
        <end position="402"/>
    </location>
</feature>
<feature type="glycosylation site" description="N-linked (GlcNAc...) asparagine" evidence="2">
    <location>
        <position position="226"/>
    </location>
</feature>
<feature type="glycosylation site" description="N-linked (GlcNAc...) asparagine" evidence="2">
    <location>
        <position position="235"/>
    </location>
</feature>
<feature type="glycosylation site" description="N-linked (GlcNAc...) asparagine" evidence="2">
    <location>
        <position position="284"/>
    </location>
</feature>
<feature type="glycosylation site" description="N-linked (GlcNAc...) asparagine" evidence="2">
    <location>
        <position position="342"/>
    </location>
</feature>
<accession>A7RX69</accession>
<accession>I6UYT4</accession>
<organism>
    <name type="scientific">Nematostella vectensis</name>
    <name type="common">Starlet sea anemone</name>
    <dbReference type="NCBI Taxonomy" id="45351"/>
    <lineage>
        <taxon>Eukaryota</taxon>
        <taxon>Metazoa</taxon>
        <taxon>Cnidaria</taxon>
        <taxon>Anthozoa</taxon>
        <taxon>Hexacorallia</taxon>
        <taxon>Actiniaria</taxon>
        <taxon>Edwardsiidae</taxon>
        <taxon>Nematostella</taxon>
    </lineage>
</organism>
<sequence length="471" mass="55044">MAAFTLWILVLNVFLLGFQARKLASNLKFPIQKCDDSTPQKNFNSFLWLVKRTPPAYFYGTIHVPYTRVWDFIPMNSKQAFTASQHVYFELDLTDEKTMRALMKCQMLPSGTMLRQTLPRKMFKRLKSHLRYIKRMIPKWIKHRDQETSSAGPYANKLYEMLTKDWDKKRPIWVMLMVNSLTESDIKTRGIPVLDQYLALEASRNHKLIGAVENVDEQCKPLNALNASQVVFALNQSLHFQERLRRGQVQVTYTTDDLIDHYNCGDLKSVLFSTQTSLPTLTVNSSLEQRERKRAQEIDQYFRNELIFQRNKRMAQRVITLLNNHPEKDFFFAFGAGHFLGNHSIIDIMKKHGYDVEYVKPEQELPSFKAKKSLNTRRERRKGCRGRRKKSKRCQKKKKRKRPDYSRVRLLQVATRRWNPTRKPYPTKLSEAPGARDISSRKAAASCTPIWTVSLALTCAVTCLLTYSGFR</sequence>
<protein>
    <recommendedName>
        <fullName>Metalloprotease TIKI homolog</fullName>
        <ecNumber>3.4.-.-</ecNumber>
    </recommendedName>
</protein>
<comment type="function">
    <text evidence="1">Metalloprotease.</text>
</comment>
<comment type="cofactor">
    <cofactor evidence="1">
        <name>Mn(2+)</name>
        <dbReference type="ChEBI" id="CHEBI:29035"/>
    </cofactor>
    <cofactor evidence="1">
        <name>Co(2+)</name>
        <dbReference type="ChEBI" id="CHEBI:48828"/>
    </cofactor>
    <text evidence="1">Divalent metal cations. Mn(2+) or Co(2+).</text>
</comment>
<comment type="subcellular location">
    <subcellularLocation>
        <location evidence="4">Membrane</location>
        <topology evidence="4">Single-pass type I membrane protein</topology>
    </subcellularLocation>
</comment>
<comment type="similarity">
    <text evidence="4">Belongs to the TIKI family.</text>
</comment>
<comment type="sequence caution" evidence="4">
    <conflict type="erroneous gene model prediction">
        <sequence resource="EMBL-CDS" id="EDO43979"/>
    </conflict>
</comment>
<keyword id="KW-0325">Glycoprotein</keyword>
<keyword id="KW-0378">Hydrolase</keyword>
<keyword id="KW-0472">Membrane</keyword>
<keyword id="KW-0479">Metal-binding</keyword>
<keyword id="KW-0482">Metalloprotease</keyword>
<keyword id="KW-0645">Protease</keyword>
<keyword id="KW-1185">Reference proteome</keyword>
<keyword id="KW-0732">Signal</keyword>
<keyword id="KW-0812">Transmembrane</keyword>
<keyword id="KW-1133">Transmembrane helix</keyword>